<keyword id="KW-0131">Cell cycle</keyword>
<keyword id="KW-0132">Cell division</keyword>
<keyword id="KW-0997">Cell inner membrane</keyword>
<keyword id="KW-1003">Cell membrane</keyword>
<keyword id="KW-0133">Cell shape</keyword>
<keyword id="KW-0961">Cell wall biogenesis/degradation</keyword>
<keyword id="KW-0460">Magnesium</keyword>
<keyword id="KW-0472">Membrane</keyword>
<keyword id="KW-0479">Metal-binding</keyword>
<keyword id="KW-0573">Peptidoglycan synthesis</keyword>
<keyword id="KW-0808">Transferase</keyword>
<keyword id="KW-0812">Transmembrane</keyword>
<keyword id="KW-1133">Transmembrane helix</keyword>
<accession>A5UCX1</accession>
<organism>
    <name type="scientific">Haemophilus influenzae (strain PittEE)</name>
    <dbReference type="NCBI Taxonomy" id="374930"/>
    <lineage>
        <taxon>Bacteria</taxon>
        <taxon>Pseudomonadati</taxon>
        <taxon>Pseudomonadota</taxon>
        <taxon>Gammaproteobacteria</taxon>
        <taxon>Pasteurellales</taxon>
        <taxon>Pasteurellaceae</taxon>
        <taxon>Haemophilus</taxon>
    </lineage>
</organism>
<feature type="chain" id="PRO_1000002984" description="Phospho-N-acetylmuramoyl-pentapeptide-transferase">
    <location>
        <begin position="1"/>
        <end position="360"/>
    </location>
</feature>
<feature type="transmembrane region" description="Helical" evidence="1">
    <location>
        <begin position="21"/>
        <end position="41"/>
    </location>
</feature>
<feature type="transmembrane region" description="Helical" evidence="1">
    <location>
        <begin position="73"/>
        <end position="93"/>
    </location>
</feature>
<feature type="transmembrane region" description="Helical" evidence="1">
    <location>
        <begin position="94"/>
        <end position="114"/>
    </location>
</feature>
<feature type="transmembrane region" description="Helical" evidence="1">
    <location>
        <begin position="132"/>
        <end position="152"/>
    </location>
</feature>
<feature type="transmembrane region" description="Helical" evidence="1">
    <location>
        <begin position="168"/>
        <end position="188"/>
    </location>
</feature>
<feature type="transmembrane region" description="Helical" evidence="1">
    <location>
        <begin position="199"/>
        <end position="219"/>
    </location>
</feature>
<feature type="transmembrane region" description="Helical" evidence="1">
    <location>
        <begin position="239"/>
        <end position="259"/>
    </location>
</feature>
<feature type="transmembrane region" description="Helical" evidence="1">
    <location>
        <begin position="263"/>
        <end position="283"/>
    </location>
</feature>
<feature type="transmembrane region" description="Helical" evidence="1">
    <location>
        <begin position="288"/>
        <end position="308"/>
    </location>
</feature>
<feature type="transmembrane region" description="Helical" evidence="1">
    <location>
        <begin position="338"/>
        <end position="358"/>
    </location>
</feature>
<reference key="1">
    <citation type="journal article" date="2007" name="Genome Biol.">
        <title>Characterization and modeling of the Haemophilus influenzae core and supragenomes based on the complete genomic sequences of Rd and 12 clinical nontypeable strains.</title>
        <authorList>
            <person name="Hogg J.S."/>
            <person name="Hu F.Z."/>
            <person name="Janto B."/>
            <person name="Boissy R."/>
            <person name="Hayes J."/>
            <person name="Keefe R."/>
            <person name="Post J.C."/>
            <person name="Ehrlich G.D."/>
        </authorList>
    </citation>
    <scope>NUCLEOTIDE SEQUENCE [LARGE SCALE GENOMIC DNA]</scope>
    <source>
        <strain>PittEE</strain>
    </source>
</reference>
<protein>
    <recommendedName>
        <fullName evidence="1">Phospho-N-acetylmuramoyl-pentapeptide-transferase</fullName>
        <ecNumber evidence="1">2.7.8.13</ecNumber>
    </recommendedName>
    <alternativeName>
        <fullName evidence="1">UDP-MurNAc-pentapeptide phosphotransferase</fullName>
    </alternativeName>
</protein>
<evidence type="ECO:0000255" key="1">
    <source>
        <dbReference type="HAMAP-Rule" id="MF_00038"/>
    </source>
</evidence>
<name>MRAY_HAEIE</name>
<sequence>MLVWLAEYLVRYETAFNAISYITVRAILTLLTALFISLWIGPKVIKRLQILKFGQEVRNDGPESHFAKKGTPTMGGVMILFSIGVSTLLWANLANPYIWVCLFVLFGYGAIGFVDDFRKITRKNTDGLIARWKYFWMSVVALVAILWLYWLGHDTDATRLVIPFFKDIMPQLGLFYIVLSYFVIVGTGNAVNLTDGLDGLAIMPTALVAGAFALIAWATGNVNFAEYLHIPYIKYSSEVVVFCTAIVGASLGFLWFNTYPAQVFMGDVGSLALGGALGVVAILVRQEFLLVIMGGVFVVEALSVILQVGSYKLRKQRIFRMAPIHHHFELKGWPEPRVIIRFWIISLMLVLMGLVTLKLR</sequence>
<comment type="function">
    <text evidence="1">Catalyzes the initial step of the lipid cycle reactions in the biosynthesis of the cell wall peptidoglycan: transfers peptidoglycan precursor phospho-MurNAc-pentapeptide from UDP-MurNAc-pentapeptide onto the lipid carrier undecaprenyl phosphate, yielding undecaprenyl-pyrophosphoryl-MurNAc-pentapeptide, known as lipid I.</text>
</comment>
<comment type="catalytic activity">
    <reaction evidence="1">
        <text>UDP-N-acetyl-alpha-D-muramoyl-L-alanyl-gamma-D-glutamyl-meso-2,6-diaminopimeloyl-D-alanyl-D-alanine + di-trans,octa-cis-undecaprenyl phosphate = di-trans,octa-cis-undecaprenyl diphospho-N-acetyl-alpha-D-muramoyl-L-alanyl-D-glutamyl-meso-2,6-diaminopimeloyl-D-alanyl-D-alanine + UMP</text>
        <dbReference type="Rhea" id="RHEA:28386"/>
        <dbReference type="ChEBI" id="CHEBI:57865"/>
        <dbReference type="ChEBI" id="CHEBI:60392"/>
        <dbReference type="ChEBI" id="CHEBI:61386"/>
        <dbReference type="ChEBI" id="CHEBI:61387"/>
        <dbReference type="EC" id="2.7.8.13"/>
    </reaction>
</comment>
<comment type="cofactor">
    <cofactor evidence="1">
        <name>Mg(2+)</name>
        <dbReference type="ChEBI" id="CHEBI:18420"/>
    </cofactor>
</comment>
<comment type="pathway">
    <text evidence="1">Cell wall biogenesis; peptidoglycan biosynthesis.</text>
</comment>
<comment type="subcellular location">
    <subcellularLocation>
        <location evidence="1">Cell inner membrane</location>
        <topology evidence="1">Multi-pass membrane protein</topology>
    </subcellularLocation>
</comment>
<comment type="similarity">
    <text evidence="1">Belongs to the glycosyltransferase 4 family. MraY subfamily.</text>
</comment>
<dbReference type="EC" id="2.7.8.13" evidence="1"/>
<dbReference type="EMBL" id="CP000671">
    <property type="protein sequence ID" value="ABQ98622.1"/>
    <property type="molecule type" value="Genomic_DNA"/>
</dbReference>
<dbReference type="SMR" id="A5UCX1"/>
<dbReference type="KEGG" id="hip:CGSHiEE_06375"/>
<dbReference type="HOGENOM" id="CLU_023982_0_0_6"/>
<dbReference type="UniPathway" id="UPA00219"/>
<dbReference type="GO" id="GO:0005886">
    <property type="term" value="C:plasma membrane"/>
    <property type="evidence" value="ECO:0007669"/>
    <property type="project" value="UniProtKB-SubCell"/>
</dbReference>
<dbReference type="GO" id="GO:0046872">
    <property type="term" value="F:metal ion binding"/>
    <property type="evidence" value="ECO:0007669"/>
    <property type="project" value="UniProtKB-KW"/>
</dbReference>
<dbReference type="GO" id="GO:0008963">
    <property type="term" value="F:phospho-N-acetylmuramoyl-pentapeptide-transferase activity"/>
    <property type="evidence" value="ECO:0007669"/>
    <property type="project" value="UniProtKB-UniRule"/>
</dbReference>
<dbReference type="GO" id="GO:0051992">
    <property type="term" value="F:UDP-N-acetylmuramoyl-L-alanyl-D-glutamyl-meso-2,6-diaminopimelyl-D-alanyl-D-alanine:undecaprenyl-phosphate transferase activity"/>
    <property type="evidence" value="ECO:0007669"/>
    <property type="project" value="RHEA"/>
</dbReference>
<dbReference type="GO" id="GO:0051301">
    <property type="term" value="P:cell division"/>
    <property type="evidence" value="ECO:0007669"/>
    <property type="project" value="UniProtKB-KW"/>
</dbReference>
<dbReference type="GO" id="GO:0071555">
    <property type="term" value="P:cell wall organization"/>
    <property type="evidence" value="ECO:0007669"/>
    <property type="project" value="UniProtKB-KW"/>
</dbReference>
<dbReference type="GO" id="GO:0009252">
    <property type="term" value="P:peptidoglycan biosynthetic process"/>
    <property type="evidence" value="ECO:0007669"/>
    <property type="project" value="UniProtKB-UniRule"/>
</dbReference>
<dbReference type="GO" id="GO:0008360">
    <property type="term" value="P:regulation of cell shape"/>
    <property type="evidence" value="ECO:0007669"/>
    <property type="project" value="UniProtKB-KW"/>
</dbReference>
<dbReference type="CDD" id="cd06852">
    <property type="entry name" value="GT_MraY"/>
    <property type="match status" value="1"/>
</dbReference>
<dbReference type="HAMAP" id="MF_00038">
    <property type="entry name" value="MraY"/>
    <property type="match status" value="1"/>
</dbReference>
<dbReference type="InterPro" id="IPR000715">
    <property type="entry name" value="Glycosyl_transferase_4"/>
</dbReference>
<dbReference type="InterPro" id="IPR003524">
    <property type="entry name" value="PNAcMuramoyl-5peptid_Trfase"/>
</dbReference>
<dbReference type="InterPro" id="IPR018480">
    <property type="entry name" value="PNAcMuramoyl-5peptid_Trfase_CS"/>
</dbReference>
<dbReference type="NCBIfam" id="TIGR00445">
    <property type="entry name" value="mraY"/>
    <property type="match status" value="1"/>
</dbReference>
<dbReference type="PANTHER" id="PTHR22926">
    <property type="entry name" value="PHOSPHO-N-ACETYLMURAMOYL-PENTAPEPTIDE-TRANSFERASE"/>
    <property type="match status" value="1"/>
</dbReference>
<dbReference type="PANTHER" id="PTHR22926:SF5">
    <property type="entry name" value="PHOSPHO-N-ACETYLMURAMOYL-PENTAPEPTIDE-TRANSFERASE HOMOLOG"/>
    <property type="match status" value="1"/>
</dbReference>
<dbReference type="Pfam" id="PF00953">
    <property type="entry name" value="Glycos_transf_4"/>
    <property type="match status" value="1"/>
</dbReference>
<dbReference type="Pfam" id="PF10555">
    <property type="entry name" value="MraY_sig1"/>
    <property type="match status" value="1"/>
</dbReference>
<dbReference type="PROSITE" id="PS01347">
    <property type="entry name" value="MRAY_1"/>
    <property type="match status" value="1"/>
</dbReference>
<dbReference type="PROSITE" id="PS01348">
    <property type="entry name" value="MRAY_2"/>
    <property type="match status" value="1"/>
</dbReference>
<proteinExistence type="inferred from homology"/>
<gene>
    <name evidence="1" type="primary">mraY</name>
    <name type="ordered locus">CGSHiEE_06375</name>
</gene>